<evidence type="ECO:0000255" key="1">
    <source>
        <dbReference type="HAMAP-Rule" id="MF_01862"/>
    </source>
</evidence>
<proteinExistence type="inferred from homology"/>
<sequence>MSQLSNPSQAFLRQRGQLSGRILLCSPPADAIAAELRQTGVEVSVLSWDHTAVNACRGAVAEEWLFTDLALPADAQWDQIALFMPKARELLDLMLSVVAPALKHAQHIWLVGEKREGVESAAKRLAKEDWDATKVDSARHCQVWSLTPPADWKPKQNDFWRAYELAQEKVDTLQLFTLPGVFSAGRLDEGTEVLLQSLPELHGRRLLDFGCGCGVIGATLKKRYPKASVELTDINLLALKSAARTAEANGVELNVYASDGLAEVQPGVDAIITNPPFHQGVKQDTRVTQQFLRDCARVLKPGGSLTLVANRFLPYPDWIEAHVGPVRVLFENSRFKVYHAVR</sequence>
<gene>
    <name evidence="1" type="primary">rsmC</name>
    <name type="ordered locus">HCH_02224</name>
</gene>
<dbReference type="EC" id="2.1.1.172" evidence="1"/>
<dbReference type="EMBL" id="CP000155">
    <property type="protein sequence ID" value="ABC29051.1"/>
    <property type="molecule type" value="Genomic_DNA"/>
</dbReference>
<dbReference type="RefSeq" id="WP_011396120.1">
    <property type="nucleotide sequence ID" value="NC_007645.1"/>
</dbReference>
<dbReference type="SMR" id="Q2SJX3"/>
<dbReference type="STRING" id="349521.HCH_02224"/>
<dbReference type="KEGG" id="hch:HCH_02224"/>
<dbReference type="eggNOG" id="COG2813">
    <property type="taxonomic scope" value="Bacteria"/>
</dbReference>
<dbReference type="HOGENOM" id="CLU_049581_0_0_6"/>
<dbReference type="OrthoDB" id="29650at2"/>
<dbReference type="Proteomes" id="UP000000238">
    <property type="component" value="Chromosome"/>
</dbReference>
<dbReference type="GO" id="GO:0005737">
    <property type="term" value="C:cytoplasm"/>
    <property type="evidence" value="ECO:0007669"/>
    <property type="project" value="UniProtKB-SubCell"/>
</dbReference>
<dbReference type="GO" id="GO:0052914">
    <property type="term" value="F:16S rRNA (guanine(1207)-N(2))-methyltransferase activity"/>
    <property type="evidence" value="ECO:0007669"/>
    <property type="project" value="UniProtKB-EC"/>
</dbReference>
<dbReference type="GO" id="GO:0003677">
    <property type="term" value="F:DNA binding"/>
    <property type="evidence" value="ECO:0007669"/>
    <property type="project" value="InterPro"/>
</dbReference>
<dbReference type="CDD" id="cd02440">
    <property type="entry name" value="AdoMet_MTases"/>
    <property type="match status" value="1"/>
</dbReference>
<dbReference type="Gene3D" id="3.40.50.150">
    <property type="entry name" value="Vaccinia Virus protein VP39"/>
    <property type="match status" value="2"/>
</dbReference>
<dbReference type="HAMAP" id="MF_01862">
    <property type="entry name" value="16SrRNA_methyltr_C"/>
    <property type="match status" value="1"/>
</dbReference>
<dbReference type="InterPro" id="IPR002052">
    <property type="entry name" value="DNA_methylase_N6_adenine_CS"/>
</dbReference>
<dbReference type="InterPro" id="IPR013675">
    <property type="entry name" value="Mtase_sm_N"/>
</dbReference>
<dbReference type="InterPro" id="IPR002295">
    <property type="entry name" value="N4/N6-MTase_EcoPI_Mod-like"/>
</dbReference>
<dbReference type="InterPro" id="IPR023543">
    <property type="entry name" value="rRNA_ssu_MeTfrase_C"/>
</dbReference>
<dbReference type="InterPro" id="IPR046977">
    <property type="entry name" value="RsmC/RlmG"/>
</dbReference>
<dbReference type="InterPro" id="IPR029063">
    <property type="entry name" value="SAM-dependent_MTases_sf"/>
</dbReference>
<dbReference type="InterPro" id="IPR007848">
    <property type="entry name" value="Small_mtfrase_dom"/>
</dbReference>
<dbReference type="PANTHER" id="PTHR47816">
    <property type="entry name" value="RIBOSOMAL RNA SMALL SUBUNIT METHYLTRANSFERASE C"/>
    <property type="match status" value="1"/>
</dbReference>
<dbReference type="PANTHER" id="PTHR47816:SF4">
    <property type="entry name" value="RIBOSOMAL RNA SMALL SUBUNIT METHYLTRANSFERASE C"/>
    <property type="match status" value="1"/>
</dbReference>
<dbReference type="Pfam" id="PF05175">
    <property type="entry name" value="MTS"/>
    <property type="match status" value="1"/>
</dbReference>
<dbReference type="Pfam" id="PF08468">
    <property type="entry name" value="MTS_N"/>
    <property type="match status" value="1"/>
</dbReference>
<dbReference type="PRINTS" id="PR00506">
    <property type="entry name" value="D21N6MTFRASE"/>
</dbReference>
<dbReference type="SUPFAM" id="SSF53335">
    <property type="entry name" value="S-adenosyl-L-methionine-dependent methyltransferases"/>
    <property type="match status" value="1"/>
</dbReference>
<keyword id="KW-0963">Cytoplasm</keyword>
<keyword id="KW-0489">Methyltransferase</keyword>
<keyword id="KW-1185">Reference proteome</keyword>
<keyword id="KW-0698">rRNA processing</keyword>
<keyword id="KW-0949">S-adenosyl-L-methionine</keyword>
<keyword id="KW-0808">Transferase</keyword>
<comment type="function">
    <text evidence="1">Specifically methylates the guanine in position 1207 of 16S rRNA in the 30S particle.</text>
</comment>
<comment type="catalytic activity">
    <reaction evidence="1">
        <text>guanosine(1207) in 16S rRNA + S-adenosyl-L-methionine = N(2)-methylguanosine(1207) in 16S rRNA + S-adenosyl-L-homocysteine + H(+)</text>
        <dbReference type="Rhea" id="RHEA:42736"/>
        <dbReference type="Rhea" id="RHEA-COMP:10213"/>
        <dbReference type="Rhea" id="RHEA-COMP:10214"/>
        <dbReference type="ChEBI" id="CHEBI:15378"/>
        <dbReference type="ChEBI" id="CHEBI:57856"/>
        <dbReference type="ChEBI" id="CHEBI:59789"/>
        <dbReference type="ChEBI" id="CHEBI:74269"/>
        <dbReference type="ChEBI" id="CHEBI:74481"/>
        <dbReference type="EC" id="2.1.1.172"/>
    </reaction>
</comment>
<comment type="subunit">
    <text evidence="1">Monomer.</text>
</comment>
<comment type="subcellular location">
    <subcellularLocation>
        <location evidence="1">Cytoplasm</location>
    </subcellularLocation>
</comment>
<comment type="similarity">
    <text evidence="1">Belongs to the methyltransferase superfamily. RsmC family.</text>
</comment>
<accession>Q2SJX3</accession>
<feature type="chain" id="PRO_0000369721" description="Ribosomal RNA small subunit methyltransferase C">
    <location>
        <begin position="1"/>
        <end position="342"/>
    </location>
</feature>
<name>RSMC_HAHCH</name>
<organism>
    <name type="scientific">Hahella chejuensis (strain KCTC 2396)</name>
    <dbReference type="NCBI Taxonomy" id="349521"/>
    <lineage>
        <taxon>Bacteria</taxon>
        <taxon>Pseudomonadati</taxon>
        <taxon>Pseudomonadota</taxon>
        <taxon>Gammaproteobacteria</taxon>
        <taxon>Oceanospirillales</taxon>
        <taxon>Hahellaceae</taxon>
        <taxon>Hahella</taxon>
    </lineage>
</organism>
<reference key="1">
    <citation type="journal article" date="2005" name="Nucleic Acids Res.">
        <title>Genomic blueprint of Hahella chejuensis, a marine microbe producing an algicidal agent.</title>
        <authorList>
            <person name="Jeong H."/>
            <person name="Yim J.H."/>
            <person name="Lee C."/>
            <person name="Choi S.-H."/>
            <person name="Park Y.K."/>
            <person name="Yoon S.H."/>
            <person name="Hur C.-G."/>
            <person name="Kang H.-Y."/>
            <person name="Kim D."/>
            <person name="Lee H.H."/>
            <person name="Park K.H."/>
            <person name="Park S.-H."/>
            <person name="Park H.-S."/>
            <person name="Lee H.K."/>
            <person name="Oh T.K."/>
            <person name="Kim J.F."/>
        </authorList>
    </citation>
    <scope>NUCLEOTIDE SEQUENCE [LARGE SCALE GENOMIC DNA]</scope>
    <source>
        <strain>KCTC 2396</strain>
    </source>
</reference>
<protein>
    <recommendedName>
        <fullName evidence="1">Ribosomal RNA small subunit methyltransferase C</fullName>
        <ecNumber evidence="1">2.1.1.172</ecNumber>
    </recommendedName>
    <alternativeName>
        <fullName evidence="1">16S rRNA m2G1207 methyltransferase</fullName>
    </alternativeName>
    <alternativeName>
        <fullName evidence="1">rRNA (guanine-N(2)-)-methyltransferase RsmC</fullName>
    </alternativeName>
</protein>